<protein>
    <recommendedName>
        <fullName evidence="1">Malate dehydrogenase</fullName>
        <ecNumber evidence="1">1.1.1.37</ecNumber>
    </recommendedName>
</protein>
<reference key="1">
    <citation type="journal article" date="2009" name="Infect. Immun.">
        <title>Comparative genomics reveal extensive transposon-mediated genomic plasticity and diversity among potential effector proteins within the genus Coxiella.</title>
        <authorList>
            <person name="Beare P.A."/>
            <person name="Unsworth N."/>
            <person name="Andoh M."/>
            <person name="Voth D.E."/>
            <person name="Omsland A."/>
            <person name="Gilk S.D."/>
            <person name="Williams K.P."/>
            <person name="Sobral B.W."/>
            <person name="Kupko J.J. III"/>
            <person name="Porcella S.F."/>
            <person name="Samuel J.E."/>
            <person name="Heinzen R.A."/>
        </authorList>
    </citation>
    <scope>NUCLEOTIDE SEQUENCE [LARGE SCALE GENOMIC DNA]</scope>
    <source>
        <strain>CbuK_Q154</strain>
    </source>
</reference>
<accession>B6J7Q0</accession>
<dbReference type="EC" id="1.1.1.37" evidence="1"/>
<dbReference type="EMBL" id="CP001020">
    <property type="protein sequence ID" value="ACJ20299.1"/>
    <property type="molecule type" value="Genomic_DNA"/>
</dbReference>
<dbReference type="RefSeq" id="WP_005770796.1">
    <property type="nucleotide sequence ID" value="NC_011528.1"/>
</dbReference>
<dbReference type="SMR" id="B6J7Q0"/>
<dbReference type="KEGG" id="cbc:CbuK_1102"/>
<dbReference type="HOGENOM" id="CLU_040727_2_0_6"/>
<dbReference type="GO" id="GO:0030060">
    <property type="term" value="F:L-malate dehydrogenase (NAD+) activity"/>
    <property type="evidence" value="ECO:0007669"/>
    <property type="project" value="UniProtKB-UniRule"/>
</dbReference>
<dbReference type="GO" id="GO:0006108">
    <property type="term" value="P:malate metabolic process"/>
    <property type="evidence" value="ECO:0007669"/>
    <property type="project" value="InterPro"/>
</dbReference>
<dbReference type="GO" id="GO:0006099">
    <property type="term" value="P:tricarboxylic acid cycle"/>
    <property type="evidence" value="ECO:0007669"/>
    <property type="project" value="UniProtKB-UniRule"/>
</dbReference>
<dbReference type="CDD" id="cd01338">
    <property type="entry name" value="MDH_chloroplast-like"/>
    <property type="match status" value="1"/>
</dbReference>
<dbReference type="FunFam" id="3.40.50.720:FF:000010">
    <property type="entry name" value="Malate dehydrogenase"/>
    <property type="match status" value="1"/>
</dbReference>
<dbReference type="FunFam" id="3.90.110.10:FF:000002">
    <property type="entry name" value="Malate dehydrogenase"/>
    <property type="match status" value="1"/>
</dbReference>
<dbReference type="Gene3D" id="3.90.110.10">
    <property type="entry name" value="Lactate dehydrogenase/glycoside hydrolase, family 4, C-terminal"/>
    <property type="match status" value="1"/>
</dbReference>
<dbReference type="Gene3D" id="3.40.50.720">
    <property type="entry name" value="NAD(P)-binding Rossmann-like Domain"/>
    <property type="match status" value="1"/>
</dbReference>
<dbReference type="HAMAP" id="MF_01517">
    <property type="entry name" value="Malate_dehydrog_2"/>
    <property type="match status" value="1"/>
</dbReference>
<dbReference type="InterPro" id="IPR001557">
    <property type="entry name" value="L-lactate/malate_DH"/>
</dbReference>
<dbReference type="InterPro" id="IPR022383">
    <property type="entry name" value="Lactate/malate_DH_C"/>
</dbReference>
<dbReference type="InterPro" id="IPR001236">
    <property type="entry name" value="Lactate/malate_DH_N"/>
</dbReference>
<dbReference type="InterPro" id="IPR015955">
    <property type="entry name" value="Lactate_DH/Glyco_Ohase_4_C"/>
</dbReference>
<dbReference type="InterPro" id="IPR001252">
    <property type="entry name" value="Malate_DH_AS"/>
</dbReference>
<dbReference type="InterPro" id="IPR010945">
    <property type="entry name" value="Malate_DH_type2"/>
</dbReference>
<dbReference type="InterPro" id="IPR036291">
    <property type="entry name" value="NAD(P)-bd_dom_sf"/>
</dbReference>
<dbReference type="NCBIfam" id="TIGR01759">
    <property type="entry name" value="MalateDH-SF1"/>
    <property type="match status" value="1"/>
</dbReference>
<dbReference type="NCBIfam" id="NF003916">
    <property type="entry name" value="PRK05442.1"/>
    <property type="match status" value="1"/>
</dbReference>
<dbReference type="PANTHER" id="PTHR23382">
    <property type="entry name" value="MALATE DEHYDROGENASE"/>
    <property type="match status" value="1"/>
</dbReference>
<dbReference type="Pfam" id="PF02866">
    <property type="entry name" value="Ldh_1_C"/>
    <property type="match status" value="1"/>
</dbReference>
<dbReference type="Pfam" id="PF00056">
    <property type="entry name" value="Ldh_1_N"/>
    <property type="match status" value="1"/>
</dbReference>
<dbReference type="PIRSF" id="PIRSF000102">
    <property type="entry name" value="Lac_mal_DH"/>
    <property type="match status" value="1"/>
</dbReference>
<dbReference type="SUPFAM" id="SSF56327">
    <property type="entry name" value="LDH C-terminal domain-like"/>
    <property type="match status" value="1"/>
</dbReference>
<dbReference type="SUPFAM" id="SSF51735">
    <property type="entry name" value="NAD(P)-binding Rossmann-fold domains"/>
    <property type="match status" value="1"/>
</dbReference>
<dbReference type="PROSITE" id="PS00068">
    <property type="entry name" value="MDH"/>
    <property type="match status" value="1"/>
</dbReference>
<feature type="chain" id="PRO_1000191619" description="Malate dehydrogenase">
    <location>
        <begin position="1"/>
        <end position="328"/>
    </location>
</feature>
<feature type="active site" description="Proton acceptor" evidence="1">
    <location>
        <position position="187"/>
    </location>
</feature>
<feature type="binding site" evidence="1">
    <location>
        <begin position="11"/>
        <end position="17"/>
    </location>
    <ligand>
        <name>NAD(+)</name>
        <dbReference type="ChEBI" id="CHEBI:57540"/>
    </ligand>
</feature>
<feature type="binding site" evidence="1">
    <location>
        <position position="92"/>
    </location>
    <ligand>
        <name>substrate</name>
    </ligand>
</feature>
<feature type="binding site" evidence="1">
    <location>
        <position position="98"/>
    </location>
    <ligand>
        <name>substrate</name>
    </ligand>
</feature>
<feature type="binding site" evidence="1">
    <location>
        <position position="105"/>
    </location>
    <ligand>
        <name>NAD(+)</name>
        <dbReference type="ChEBI" id="CHEBI:57540"/>
    </ligand>
</feature>
<feature type="binding site" evidence="1">
    <location>
        <position position="112"/>
    </location>
    <ligand>
        <name>NAD(+)</name>
        <dbReference type="ChEBI" id="CHEBI:57540"/>
    </ligand>
</feature>
<feature type="binding site" evidence="1">
    <location>
        <begin position="129"/>
        <end position="131"/>
    </location>
    <ligand>
        <name>NAD(+)</name>
        <dbReference type="ChEBI" id="CHEBI:57540"/>
    </ligand>
</feature>
<feature type="binding site" evidence="1">
    <location>
        <position position="131"/>
    </location>
    <ligand>
        <name>substrate</name>
    </ligand>
</feature>
<feature type="binding site" evidence="1">
    <location>
        <position position="162"/>
    </location>
    <ligand>
        <name>substrate</name>
    </ligand>
</feature>
<proteinExistence type="inferred from homology"/>
<name>MDH_COXB1</name>
<organism>
    <name type="scientific">Coxiella burnetii (strain CbuK_Q154)</name>
    <name type="common">Coxiella burnetii (strain Q154)</name>
    <dbReference type="NCBI Taxonomy" id="434924"/>
    <lineage>
        <taxon>Bacteria</taxon>
        <taxon>Pseudomonadati</taxon>
        <taxon>Pseudomonadota</taxon>
        <taxon>Gammaproteobacteria</taxon>
        <taxon>Legionellales</taxon>
        <taxon>Coxiellaceae</taxon>
        <taxon>Coxiella</taxon>
    </lineage>
</organism>
<gene>
    <name evidence="1" type="primary">mdh</name>
    <name type="ordered locus">CbuK_1102</name>
</gene>
<comment type="function">
    <text evidence="1">Catalyzes the reversible oxidation of malate to oxaloacetate.</text>
</comment>
<comment type="catalytic activity">
    <reaction evidence="1">
        <text>(S)-malate + NAD(+) = oxaloacetate + NADH + H(+)</text>
        <dbReference type="Rhea" id="RHEA:21432"/>
        <dbReference type="ChEBI" id="CHEBI:15378"/>
        <dbReference type="ChEBI" id="CHEBI:15589"/>
        <dbReference type="ChEBI" id="CHEBI:16452"/>
        <dbReference type="ChEBI" id="CHEBI:57540"/>
        <dbReference type="ChEBI" id="CHEBI:57945"/>
        <dbReference type="EC" id="1.1.1.37"/>
    </reaction>
</comment>
<comment type="similarity">
    <text evidence="1">Belongs to the LDH/MDH superfamily. MDH type 2 family.</text>
</comment>
<sequence length="328" mass="35479">MAKHVKVAVTGAAGQIGYALLFRLASGQAFGLDTTVDLHLLEIEPALPALKGVVMELEDCAFPLLRNMVVTSDPRVAFNDVNWALLVGAAPRKAGMERKDLLEKNGSIFAGQGKAINENAASDVRIFVVGNPCNTNCLIAMNNAPDIPKDRFYAMTRLDQNRAIGQLALKAGVDVPSVKNMIIWGNHSSTQYPDFYHATIDGKPATEVIRDKNWLLNDFIPVIQQRGAAVIKARGASSAASAANAALDSVWSLINTTPADDNYSVALCAQGQYGVDEGLIFSFPCRTENGVVSVIEEIEHNEFGQQKLKETLDELREERDAVEALGLI</sequence>
<keyword id="KW-0520">NAD</keyword>
<keyword id="KW-0560">Oxidoreductase</keyword>
<keyword id="KW-0816">Tricarboxylic acid cycle</keyword>
<evidence type="ECO:0000255" key="1">
    <source>
        <dbReference type="HAMAP-Rule" id="MF_01517"/>
    </source>
</evidence>